<protein>
    <recommendedName>
        <fullName evidence="1">Negative modulator of initiation of replication</fullName>
    </recommendedName>
</protein>
<name>SEQA_ACTSZ</name>
<reference key="1">
    <citation type="journal article" date="2010" name="BMC Genomics">
        <title>A genomic perspective on the potential of Actinobacillus succinogenes for industrial succinate production.</title>
        <authorList>
            <person name="McKinlay J.B."/>
            <person name="Laivenieks M."/>
            <person name="Schindler B.D."/>
            <person name="McKinlay A.A."/>
            <person name="Siddaramappa S."/>
            <person name="Challacombe J.F."/>
            <person name="Lowry S.R."/>
            <person name="Clum A."/>
            <person name="Lapidus A.L."/>
            <person name="Burkhart K.B."/>
            <person name="Harkins V."/>
            <person name="Vieille C."/>
        </authorList>
    </citation>
    <scope>NUCLEOTIDE SEQUENCE [LARGE SCALE GENOMIC DNA]</scope>
    <source>
        <strain>ATCC 55618 / DSM 22257 / CCUG 43843 / 130Z</strain>
    </source>
</reference>
<gene>
    <name evidence="1" type="primary">seqA</name>
    <name type="ordered locus">Asuc_0963</name>
</gene>
<feature type="chain" id="PRO_0000413917" description="Negative modulator of initiation of replication">
    <location>
        <begin position="1"/>
        <end position="212"/>
    </location>
</feature>
<feature type="region of interest" description="Interaction with DNA" evidence="1">
    <location>
        <begin position="113"/>
        <end position="114"/>
    </location>
</feature>
<feature type="region of interest" description="Interaction with DNA" evidence="1">
    <location>
        <begin position="144"/>
        <end position="148"/>
    </location>
</feature>
<evidence type="ECO:0000255" key="1">
    <source>
        <dbReference type="HAMAP-Rule" id="MF_00908"/>
    </source>
</evidence>
<dbReference type="EMBL" id="CP000746">
    <property type="protein sequence ID" value="ABR74331.1"/>
    <property type="molecule type" value="Genomic_DNA"/>
</dbReference>
<dbReference type="RefSeq" id="WP_012072708.1">
    <property type="nucleotide sequence ID" value="NC_009655.1"/>
</dbReference>
<dbReference type="SMR" id="A6VMY4"/>
<dbReference type="STRING" id="339671.Asuc_0963"/>
<dbReference type="KEGG" id="asu:Asuc_0963"/>
<dbReference type="eggNOG" id="COG3057">
    <property type="taxonomic scope" value="Bacteria"/>
</dbReference>
<dbReference type="HOGENOM" id="CLU_099733_0_0_6"/>
<dbReference type="OrthoDB" id="5591069at2"/>
<dbReference type="Proteomes" id="UP000001114">
    <property type="component" value="Chromosome"/>
</dbReference>
<dbReference type="GO" id="GO:0005737">
    <property type="term" value="C:cytoplasm"/>
    <property type="evidence" value="ECO:0007669"/>
    <property type="project" value="UniProtKB-SubCell"/>
</dbReference>
<dbReference type="GO" id="GO:0003677">
    <property type="term" value="F:DNA binding"/>
    <property type="evidence" value="ECO:0007669"/>
    <property type="project" value="UniProtKB-UniRule"/>
</dbReference>
<dbReference type="GO" id="GO:0032297">
    <property type="term" value="P:negative regulation of DNA-templated DNA replication initiation"/>
    <property type="evidence" value="ECO:0007669"/>
    <property type="project" value="UniProtKB-UniRule"/>
</dbReference>
<dbReference type="GO" id="GO:0006355">
    <property type="term" value="P:regulation of DNA-templated transcription"/>
    <property type="evidence" value="ECO:0007669"/>
    <property type="project" value="InterPro"/>
</dbReference>
<dbReference type="Gene3D" id="1.10.1220.10">
    <property type="entry name" value="Met repressor-like"/>
    <property type="match status" value="1"/>
</dbReference>
<dbReference type="Gene3D" id="1.20.1380.10">
    <property type="entry name" value="Replication modulator SeqA, C-terminal DNA-binding domain"/>
    <property type="match status" value="1"/>
</dbReference>
<dbReference type="HAMAP" id="MF_00908">
    <property type="entry name" value="SeqA"/>
    <property type="match status" value="1"/>
</dbReference>
<dbReference type="InterPro" id="IPR013321">
    <property type="entry name" value="Arc_rbn_hlx_hlx"/>
</dbReference>
<dbReference type="InterPro" id="IPR010985">
    <property type="entry name" value="Ribbon_hlx_hlx"/>
</dbReference>
<dbReference type="InterPro" id="IPR005621">
    <property type="entry name" value="SeqA"/>
</dbReference>
<dbReference type="InterPro" id="IPR026577">
    <property type="entry name" value="SeqA_DNA-bd_C"/>
</dbReference>
<dbReference type="InterPro" id="IPR036835">
    <property type="entry name" value="SeqA_DNA-bd_C_sf"/>
</dbReference>
<dbReference type="InterPro" id="IPR033761">
    <property type="entry name" value="SeqA_N"/>
</dbReference>
<dbReference type="NCBIfam" id="NF008389">
    <property type="entry name" value="PRK11187.1"/>
    <property type="match status" value="1"/>
</dbReference>
<dbReference type="Pfam" id="PF03925">
    <property type="entry name" value="SeqA"/>
    <property type="match status" value="1"/>
</dbReference>
<dbReference type="Pfam" id="PF17206">
    <property type="entry name" value="SeqA_N"/>
    <property type="match status" value="1"/>
</dbReference>
<dbReference type="PIRSF" id="PIRSF019401">
    <property type="entry name" value="SeqA"/>
    <property type="match status" value="1"/>
</dbReference>
<dbReference type="SUPFAM" id="SSF82808">
    <property type="entry name" value="Replication modulator SeqA, C-terminal DNA-binding domain"/>
    <property type="match status" value="1"/>
</dbReference>
<dbReference type="SUPFAM" id="SSF47598">
    <property type="entry name" value="Ribbon-helix-helix"/>
    <property type="match status" value="1"/>
</dbReference>
<sequence>MKIIEVDEELYQFIASHTQSIGESASDILRRLLNLPTSSVSSVALETVAVESAEAANPETPSAVKNDFVLEPVAEKSSLEKTVKKQPEQVICHIVNKVRQVIESEAFQHETKAVVRFLAILTALYRTNPEGFSLAIESEQVQGRTRVYFARDEATLLAAGTHTKPKQIPDTPYWVITNNNSGRKMIMLEGVMHGMQLPDELIEDIRGYFIVN</sequence>
<organism>
    <name type="scientific">Actinobacillus succinogenes (strain ATCC 55618 / DSM 22257 / CCUG 43843 / 130Z)</name>
    <dbReference type="NCBI Taxonomy" id="339671"/>
    <lineage>
        <taxon>Bacteria</taxon>
        <taxon>Pseudomonadati</taxon>
        <taxon>Pseudomonadota</taxon>
        <taxon>Gammaproteobacteria</taxon>
        <taxon>Pasteurellales</taxon>
        <taxon>Pasteurellaceae</taxon>
        <taxon>Actinobacillus</taxon>
    </lineage>
</organism>
<keyword id="KW-0963">Cytoplasm</keyword>
<keyword id="KW-0236">DNA replication inhibitor</keyword>
<keyword id="KW-0238">DNA-binding</keyword>
<keyword id="KW-1185">Reference proteome</keyword>
<proteinExistence type="inferred from homology"/>
<accession>A6VMY4</accession>
<comment type="function">
    <text evidence="1">Negative regulator of replication initiation, which contributes to regulation of DNA replication and ensures that replication initiation occurs exactly once per chromosome per cell cycle. Binds to pairs of hemimethylated GATC sequences in the oriC region, thus preventing assembly of replication proteins and re-initiation at newly replicated origins. Repression is relieved when the region becomes fully methylated.</text>
</comment>
<comment type="subunit">
    <text evidence="1">Homodimer. Polymerizes to form helical filaments.</text>
</comment>
<comment type="subcellular location">
    <subcellularLocation>
        <location evidence="1">Cytoplasm</location>
    </subcellularLocation>
</comment>
<comment type="similarity">
    <text evidence="1">Belongs to the SeqA family.</text>
</comment>